<organism>
    <name type="scientific">Bacillus subtilis (strain 168)</name>
    <dbReference type="NCBI Taxonomy" id="224308"/>
    <lineage>
        <taxon>Bacteria</taxon>
        <taxon>Bacillati</taxon>
        <taxon>Bacillota</taxon>
        <taxon>Bacilli</taxon>
        <taxon>Bacillales</taxon>
        <taxon>Bacillaceae</taxon>
        <taxon>Bacillus</taxon>
    </lineage>
</organism>
<protein>
    <recommendedName>
        <fullName evidence="4">Type II restriction enzyme BsuMI component YdiS</fullName>
        <shortName>R.BsuM</shortName>
        <shortName>R.BsuMI</shortName>
        <ecNumber evidence="2">3.1.21.4</ecNumber>
    </recommendedName>
    <alternativeName>
        <fullName>Endonuclease BsuMI component YdiS</fullName>
    </alternativeName>
    <alternativeName>
        <fullName>Type-2 restriction enzyme BsuMI component YdiS</fullName>
    </alternativeName>
</protein>
<feature type="chain" id="PRO_0000379882" description="Type II restriction enzyme BsuMI component YdiS">
    <location>
        <begin position="1"/>
        <end position="343"/>
    </location>
</feature>
<name>YDIS_BACSU</name>
<evidence type="ECO:0000269" key="1">
    <source>
    </source>
</evidence>
<evidence type="ECO:0000269" key="2">
    <source>
    </source>
</evidence>
<evidence type="ECO:0000269" key="3">
    <source>
    </source>
</evidence>
<evidence type="ECO:0000303" key="4">
    <source>
    </source>
</evidence>
<proteinExistence type="evidence at protein level"/>
<keyword id="KW-0255">Endonuclease</keyword>
<keyword id="KW-0378">Hydrolase</keyword>
<keyword id="KW-0540">Nuclease</keyword>
<keyword id="KW-1185">Reference proteome</keyword>
<keyword id="KW-0680">Restriction system</keyword>
<gene>
    <name type="primary">ydiS</name>
    <name type="ordered locus">BSU06100</name>
</gene>
<sequence length="343" mass="40033">MEISKQTSDLLLSLEKKKGTLPKFSVLRSIPRNRIIYGAPGTGKSNYLEREVGKIFGDNPYVFTRVTFFPGYTYGQFIGAYKPVPIYKKLSGEEEIFSSNFRDKMENFEPMIDYQFVPGPFIDVLIKALKNRYTNFILIIEEINRANAASVFGDIFQLLDRNKNGESDYPVTFGPDIMNYLARNGIKDEMIKLPSNFFIWATMNNADQGVLPLDTAFKRRWSFEYLELEKYRKAVDSWKLSLRYKGHNKVIMWNDFRDIINKRLKGKVPEDKLLGPFFLKESELWNQNVFKNKLLYYLKEDVFKHNPTIDFLNASTFSELIEKYDGSDNIFTFDIDDSSFVSD</sequence>
<accession>O34885</accession>
<accession>Q797C9</accession>
<comment type="function">
    <text evidence="2 3 4">A P subtype restriction enzyme that recognizes the double-stranded sequence 5'-CTCGAG-3'; the cleavage site is unknown.</text>
</comment>
<comment type="catalytic activity">
    <reaction evidence="2">
        <text>Endonucleolytic cleavage of DNA to give specific double-stranded fragments with terminal 5'-phosphates.</text>
        <dbReference type="EC" id="3.1.21.4"/>
    </reaction>
</comment>
<comment type="subunit">
    <text evidence="1">BsuMI restriction activity requires YdiR, YdiS and YdjA.</text>
</comment>
<comment type="developmental stage">
    <text evidence="1">Not expressed during sporulation.</text>
</comment>
<comment type="induction">
    <text evidence="1">Constitutively expressed during exponential growth. Encoded in an operon with ydiR and ydjA.</text>
</comment>
<comment type="disruption phenotype">
    <text evidence="1 3">Not essential; its disruption results in increased transformation by plasmid DNA carrying multiple BsuMI target sequences (PubMed:11751814). Triple deletion ydiO-ydiP-ydiS leads to loss of susceptibility to MspJI, which only digests C-methylated DNA (PubMed:32324221).</text>
</comment>
<dbReference type="EC" id="3.1.21.4" evidence="2"/>
<dbReference type="EMBL" id="AB007637">
    <property type="protein sequence ID" value="BAA22754.1"/>
    <property type="molecule type" value="Genomic_DNA"/>
</dbReference>
<dbReference type="EMBL" id="AL009126">
    <property type="protein sequence ID" value="CAB12429.1"/>
    <property type="molecule type" value="Genomic_DNA"/>
</dbReference>
<dbReference type="PIR" id="D69788">
    <property type="entry name" value="D69788"/>
</dbReference>
<dbReference type="SMR" id="O34885"/>
<dbReference type="FunCoup" id="O34885">
    <property type="interactions" value="21"/>
</dbReference>
<dbReference type="STRING" id="224308.BSU06100"/>
<dbReference type="REBASE" id="156235">
    <property type="entry name" value="Bsu16045ORF661P"/>
</dbReference>
<dbReference type="REBASE" id="162053">
    <property type="entry name" value="R2.BsuBS38ORF585P"/>
</dbReference>
<dbReference type="REBASE" id="203779">
    <property type="entry name" value="R2.Lbr1106ORF1748P"/>
</dbReference>
<dbReference type="REBASE" id="619">
    <property type="entry name" value="BsuMI"/>
</dbReference>
<dbReference type="PaxDb" id="224308-BSU06100"/>
<dbReference type="DNASU" id="938023"/>
<dbReference type="EnsemblBacteria" id="CAB12429">
    <property type="protein sequence ID" value="CAB12429"/>
    <property type="gene ID" value="BSU_06100"/>
</dbReference>
<dbReference type="GeneID" id="938023"/>
<dbReference type="KEGG" id="bsu:BSU06100"/>
<dbReference type="PATRIC" id="fig|224308.179.peg.661"/>
<dbReference type="eggNOG" id="COG1401">
    <property type="taxonomic scope" value="Bacteria"/>
</dbReference>
<dbReference type="InParanoid" id="O34885"/>
<dbReference type="OrthoDB" id="9781481at2"/>
<dbReference type="PhylomeDB" id="O34885"/>
<dbReference type="BioCyc" id="BSUB:BSU06100-MONOMER"/>
<dbReference type="PRO" id="PR:O34885"/>
<dbReference type="Proteomes" id="UP000001570">
    <property type="component" value="Chromosome"/>
</dbReference>
<dbReference type="GO" id="GO:0005524">
    <property type="term" value="F:ATP binding"/>
    <property type="evidence" value="ECO:0007669"/>
    <property type="project" value="InterPro"/>
</dbReference>
<dbReference type="GO" id="GO:0016887">
    <property type="term" value="F:ATP hydrolysis activity"/>
    <property type="evidence" value="ECO:0007669"/>
    <property type="project" value="InterPro"/>
</dbReference>
<dbReference type="GO" id="GO:0009036">
    <property type="term" value="F:type II site-specific deoxyribonuclease activity"/>
    <property type="evidence" value="ECO:0007669"/>
    <property type="project" value="UniProtKB-EC"/>
</dbReference>
<dbReference type="GO" id="GO:0009307">
    <property type="term" value="P:DNA restriction-modification system"/>
    <property type="evidence" value="ECO:0007669"/>
    <property type="project" value="UniProtKB-KW"/>
</dbReference>
<dbReference type="Gene3D" id="3.40.50.300">
    <property type="entry name" value="P-loop containing nucleotide triphosphate hydrolases"/>
    <property type="match status" value="1"/>
</dbReference>
<dbReference type="InterPro" id="IPR011704">
    <property type="entry name" value="ATPase_dyneun-rel_AAA"/>
</dbReference>
<dbReference type="InterPro" id="IPR052934">
    <property type="entry name" value="Methyl-DNA_Rec/Restrict_Enz"/>
</dbReference>
<dbReference type="InterPro" id="IPR027417">
    <property type="entry name" value="P-loop_NTPase"/>
</dbReference>
<dbReference type="PANTHER" id="PTHR37291">
    <property type="entry name" value="5-METHYLCYTOSINE-SPECIFIC RESTRICTION ENZYME B"/>
    <property type="match status" value="1"/>
</dbReference>
<dbReference type="PANTHER" id="PTHR37291:SF1">
    <property type="entry name" value="TYPE IV METHYL-DIRECTED RESTRICTION ENZYME ECOKMCRB SUBUNIT"/>
    <property type="match status" value="1"/>
</dbReference>
<dbReference type="Pfam" id="PF07728">
    <property type="entry name" value="AAA_5"/>
    <property type="match status" value="1"/>
</dbReference>
<dbReference type="SUPFAM" id="SSF52540">
    <property type="entry name" value="P-loop containing nucleoside triphosphate hydrolases"/>
    <property type="match status" value="1"/>
</dbReference>
<reference key="1">
    <citation type="journal article" date="1997" name="DNA Res.">
        <title>Sequence analysis of the groESL-cotA region of the Bacillus subtilis genome, containing the restriction/modification system genes.</title>
        <authorList>
            <person name="Kasahara Y."/>
            <person name="Nakai S."/>
            <person name="Ogasawara N."/>
            <person name="Yata K."/>
            <person name="Sadaie Y."/>
        </authorList>
    </citation>
    <scope>NUCLEOTIDE SEQUENCE [GENOMIC DNA]</scope>
    <source>
        <strain>168 / Marburg / ATCC 6051 / DSM 10 / JCM 1465 / NBRC 13719 / NCIMB 3610 / NRRL NRS-744 / VKM B-501</strain>
    </source>
</reference>
<reference key="2">
    <citation type="journal article" date="1997" name="Nature">
        <title>The complete genome sequence of the Gram-positive bacterium Bacillus subtilis.</title>
        <authorList>
            <person name="Kunst F."/>
            <person name="Ogasawara N."/>
            <person name="Moszer I."/>
            <person name="Albertini A.M."/>
            <person name="Alloni G."/>
            <person name="Azevedo V."/>
            <person name="Bertero M.G."/>
            <person name="Bessieres P."/>
            <person name="Bolotin A."/>
            <person name="Borchert S."/>
            <person name="Borriss R."/>
            <person name="Boursier L."/>
            <person name="Brans A."/>
            <person name="Braun M."/>
            <person name="Brignell S.C."/>
            <person name="Bron S."/>
            <person name="Brouillet S."/>
            <person name="Bruschi C.V."/>
            <person name="Caldwell B."/>
            <person name="Capuano V."/>
            <person name="Carter N.M."/>
            <person name="Choi S.-K."/>
            <person name="Codani J.-J."/>
            <person name="Connerton I.F."/>
            <person name="Cummings N.J."/>
            <person name="Daniel R.A."/>
            <person name="Denizot F."/>
            <person name="Devine K.M."/>
            <person name="Duesterhoeft A."/>
            <person name="Ehrlich S.D."/>
            <person name="Emmerson P.T."/>
            <person name="Entian K.-D."/>
            <person name="Errington J."/>
            <person name="Fabret C."/>
            <person name="Ferrari E."/>
            <person name="Foulger D."/>
            <person name="Fritz C."/>
            <person name="Fujita M."/>
            <person name="Fujita Y."/>
            <person name="Fuma S."/>
            <person name="Galizzi A."/>
            <person name="Galleron N."/>
            <person name="Ghim S.-Y."/>
            <person name="Glaser P."/>
            <person name="Goffeau A."/>
            <person name="Golightly E.J."/>
            <person name="Grandi G."/>
            <person name="Guiseppi G."/>
            <person name="Guy B.J."/>
            <person name="Haga K."/>
            <person name="Haiech J."/>
            <person name="Harwood C.R."/>
            <person name="Henaut A."/>
            <person name="Hilbert H."/>
            <person name="Holsappel S."/>
            <person name="Hosono S."/>
            <person name="Hullo M.-F."/>
            <person name="Itaya M."/>
            <person name="Jones L.-M."/>
            <person name="Joris B."/>
            <person name="Karamata D."/>
            <person name="Kasahara Y."/>
            <person name="Klaerr-Blanchard M."/>
            <person name="Klein C."/>
            <person name="Kobayashi Y."/>
            <person name="Koetter P."/>
            <person name="Koningstein G."/>
            <person name="Krogh S."/>
            <person name="Kumano M."/>
            <person name="Kurita K."/>
            <person name="Lapidus A."/>
            <person name="Lardinois S."/>
            <person name="Lauber J."/>
            <person name="Lazarevic V."/>
            <person name="Lee S.-M."/>
            <person name="Levine A."/>
            <person name="Liu H."/>
            <person name="Masuda S."/>
            <person name="Mauel C."/>
            <person name="Medigue C."/>
            <person name="Medina N."/>
            <person name="Mellado R.P."/>
            <person name="Mizuno M."/>
            <person name="Moestl D."/>
            <person name="Nakai S."/>
            <person name="Noback M."/>
            <person name="Noone D."/>
            <person name="O'Reilly M."/>
            <person name="Ogawa K."/>
            <person name="Ogiwara A."/>
            <person name="Oudega B."/>
            <person name="Park S.-H."/>
            <person name="Parro V."/>
            <person name="Pohl T.M."/>
            <person name="Portetelle D."/>
            <person name="Porwollik S."/>
            <person name="Prescott A.M."/>
            <person name="Presecan E."/>
            <person name="Pujic P."/>
            <person name="Purnelle B."/>
            <person name="Rapoport G."/>
            <person name="Rey M."/>
            <person name="Reynolds S."/>
            <person name="Rieger M."/>
            <person name="Rivolta C."/>
            <person name="Rocha E."/>
            <person name="Roche B."/>
            <person name="Rose M."/>
            <person name="Sadaie Y."/>
            <person name="Sato T."/>
            <person name="Scanlan E."/>
            <person name="Schleich S."/>
            <person name="Schroeter R."/>
            <person name="Scoffone F."/>
            <person name="Sekiguchi J."/>
            <person name="Sekowska A."/>
            <person name="Seror S.J."/>
            <person name="Serror P."/>
            <person name="Shin B.-S."/>
            <person name="Soldo B."/>
            <person name="Sorokin A."/>
            <person name="Tacconi E."/>
            <person name="Takagi T."/>
            <person name="Takahashi H."/>
            <person name="Takemaru K."/>
            <person name="Takeuchi M."/>
            <person name="Tamakoshi A."/>
            <person name="Tanaka T."/>
            <person name="Terpstra P."/>
            <person name="Tognoni A."/>
            <person name="Tosato V."/>
            <person name="Uchiyama S."/>
            <person name="Vandenbol M."/>
            <person name="Vannier F."/>
            <person name="Vassarotti A."/>
            <person name="Viari A."/>
            <person name="Wambutt R."/>
            <person name="Wedler E."/>
            <person name="Wedler H."/>
            <person name="Weitzenegger T."/>
            <person name="Winters P."/>
            <person name="Wipat A."/>
            <person name="Yamamoto H."/>
            <person name="Yamane K."/>
            <person name="Yasumoto K."/>
            <person name="Yata K."/>
            <person name="Yoshida K."/>
            <person name="Yoshikawa H.-F."/>
            <person name="Zumstein E."/>
            <person name="Yoshikawa H."/>
            <person name="Danchin A."/>
        </authorList>
    </citation>
    <scope>NUCLEOTIDE SEQUENCE [LARGE SCALE GENOMIC DNA]</scope>
    <source>
        <strain>168</strain>
    </source>
</reference>
<reference key="3">
    <citation type="journal article" date="1988" name="Mol. Gen. Genet.">
        <title>Restriction and modification in Bacillus subtilis Marburg 168: target sites and effects on plasmid transformation.</title>
        <authorList>
            <person name="Bron S."/>
            <person name="Janniere L."/>
            <person name="Ehrlich S.D."/>
        </authorList>
    </citation>
    <scope>FUNCTION</scope>
    <scope>DNA TARGET SEQUENCE</scope>
    <source>
        <strain>168 / Marburg / ATCC 6051 / DSM 10 / JCM 1465 / NBRC 13719 / NCIMB 3610 / NRRL NRS-744 / VKM B-501</strain>
    </source>
</reference>
<reference key="4">
    <citation type="journal article" date="2002" name="J. Bacteriol.">
        <title>Molecular organization of intrinsic restriction and modification genes BsuM of Bacillus subtilis Marburg.</title>
        <authorList>
            <person name="Ohshima H."/>
            <person name="Matsuoka S."/>
            <person name="Asai K."/>
            <person name="Sadaie Y."/>
        </authorList>
    </citation>
    <scope>SUBUNIT</scope>
    <scope>DEVELOPMENTAL STAGE</scope>
    <scope>INDUCTION</scope>
    <scope>OPERON STRUCTURE</scope>
    <scope>DISRUPTION PHENOTYPE</scope>
    <source>
        <strain>168 / Marburg / ATCC 6051 / DSM 10 / JCM 1465 / NBRC 13719 / NCIMB 3610 / NRRL NRS-744 / VKM B-501</strain>
    </source>
</reference>
<reference key="5">
    <citation type="journal article" date="2003" name="Nucleic Acids Res.">
        <title>A nomenclature for restriction enzymes, DNA methyltransferases, homing endonucleases and their genes.</title>
        <authorList>
            <person name="Roberts R.J."/>
            <person name="Belfort M."/>
            <person name="Bestor T."/>
            <person name="Bhagwat A.S."/>
            <person name="Bickle T.A."/>
            <person name="Bitinaite J."/>
            <person name="Blumenthal R.M."/>
            <person name="Degtyarev S.K."/>
            <person name="Dryden D.T."/>
            <person name="Dybvig K."/>
            <person name="Firman K."/>
            <person name="Gromova E.S."/>
            <person name="Gumport R.I."/>
            <person name="Halford S.E."/>
            <person name="Hattman S."/>
            <person name="Heitman J."/>
            <person name="Hornby D.P."/>
            <person name="Janulaitis A."/>
            <person name="Jeltsch A."/>
            <person name="Josephsen J."/>
            <person name="Kiss A."/>
            <person name="Klaenhammer T.R."/>
            <person name="Kobayashi I."/>
            <person name="Kong H."/>
            <person name="Krueger D.H."/>
            <person name="Lacks S."/>
            <person name="Marinus M.G."/>
            <person name="Miyahara M."/>
            <person name="Morgan R.D."/>
            <person name="Murray N.E."/>
            <person name="Nagaraja V."/>
            <person name="Piekarowicz A."/>
            <person name="Pingoud A."/>
            <person name="Raleigh E."/>
            <person name="Rao D.N."/>
            <person name="Reich N."/>
            <person name="Repin V.E."/>
            <person name="Selker E.U."/>
            <person name="Shaw P.C."/>
            <person name="Stein D.C."/>
            <person name="Stoddard B.L."/>
            <person name="Szybalski W."/>
            <person name="Trautner T.A."/>
            <person name="Van Etten J.L."/>
            <person name="Vitor J.M."/>
            <person name="Wilson G.G."/>
            <person name="Xu S.Y."/>
        </authorList>
    </citation>
    <scope>NOMENCLATURE</scope>
    <scope>SUBTYPE</scope>
</reference>
<reference key="6">
    <citation type="journal article" date="2020" name="Nucleic Acids Res.">
        <title>Methyltransferase DnmA is responsible for genome-wide N6-methyladenosine modifications at non-palindromic recognition sites in Bacillus subtilis.</title>
        <authorList>
            <person name="Nye T.M."/>
            <person name="van Gijtenbeek L.A."/>
            <person name="Stevens A.G."/>
            <person name="Schroeder J.W."/>
            <person name="Randall J.R."/>
            <person name="Matthews L.A."/>
            <person name="Simmons L.A."/>
        </authorList>
    </citation>
    <scope>FUNCTION</scope>
    <scope>DISRUPTION PHENOTYPE</scope>
    <source>
        <strain>168 / PY79</strain>
    </source>
</reference>